<keyword id="KW-0067">ATP-binding</keyword>
<keyword id="KW-0436">Ligase</keyword>
<keyword id="KW-0547">Nucleotide-binding</keyword>
<keyword id="KW-0648">Protein biosynthesis</keyword>
<accession>Q6HP81</accession>
<name>GATA_BACHK</name>
<feature type="chain" id="PRO_0000241070" description="Glutamyl-tRNA(Gln) amidotransferase subunit A">
    <location>
        <begin position="1"/>
        <end position="485"/>
    </location>
</feature>
<feature type="active site" description="Charge relay system" evidence="1">
    <location>
        <position position="78"/>
    </location>
</feature>
<feature type="active site" description="Charge relay system" evidence="1">
    <location>
        <position position="153"/>
    </location>
</feature>
<feature type="active site" description="Acyl-ester intermediate" evidence="1">
    <location>
        <position position="177"/>
    </location>
</feature>
<proteinExistence type="inferred from homology"/>
<evidence type="ECO:0000255" key="1">
    <source>
        <dbReference type="HAMAP-Rule" id="MF_00120"/>
    </source>
</evidence>
<comment type="function">
    <text evidence="1">Allows the formation of correctly charged Gln-tRNA(Gln) through the transamidation of misacylated Glu-tRNA(Gln) in organisms which lack glutaminyl-tRNA synthetase. The reaction takes place in the presence of glutamine and ATP through an activated gamma-phospho-Glu-tRNA(Gln).</text>
</comment>
<comment type="catalytic activity">
    <reaction evidence="1">
        <text>L-glutamyl-tRNA(Gln) + L-glutamine + ATP + H2O = L-glutaminyl-tRNA(Gln) + L-glutamate + ADP + phosphate + H(+)</text>
        <dbReference type="Rhea" id="RHEA:17521"/>
        <dbReference type="Rhea" id="RHEA-COMP:9681"/>
        <dbReference type="Rhea" id="RHEA-COMP:9684"/>
        <dbReference type="ChEBI" id="CHEBI:15377"/>
        <dbReference type="ChEBI" id="CHEBI:15378"/>
        <dbReference type="ChEBI" id="CHEBI:29985"/>
        <dbReference type="ChEBI" id="CHEBI:30616"/>
        <dbReference type="ChEBI" id="CHEBI:43474"/>
        <dbReference type="ChEBI" id="CHEBI:58359"/>
        <dbReference type="ChEBI" id="CHEBI:78520"/>
        <dbReference type="ChEBI" id="CHEBI:78521"/>
        <dbReference type="ChEBI" id="CHEBI:456216"/>
        <dbReference type="EC" id="6.3.5.7"/>
    </reaction>
</comment>
<comment type="subunit">
    <text evidence="1">Heterotrimer of A, B and C subunits.</text>
</comment>
<comment type="similarity">
    <text evidence="1">Belongs to the amidase family. GatA subfamily.</text>
</comment>
<protein>
    <recommendedName>
        <fullName evidence="1">Glutamyl-tRNA(Gln) amidotransferase subunit A</fullName>
        <shortName evidence="1">Glu-ADT subunit A</shortName>
        <ecNumber evidence="1">6.3.5.7</ecNumber>
    </recommendedName>
</protein>
<dbReference type="EC" id="6.3.5.7" evidence="1"/>
<dbReference type="EMBL" id="AE017355">
    <property type="protein sequence ID" value="AAT63906.1"/>
    <property type="molecule type" value="Genomic_DNA"/>
</dbReference>
<dbReference type="RefSeq" id="WP_000051434.1">
    <property type="nucleotide sequence ID" value="NC_005957.1"/>
</dbReference>
<dbReference type="RefSeq" id="YP_034639.1">
    <property type="nucleotide sequence ID" value="NC_005957.1"/>
</dbReference>
<dbReference type="SMR" id="Q6HP81"/>
<dbReference type="KEGG" id="btk:BT9727_0289"/>
<dbReference type="PATRIC" id="fig|281309.8.peg.309"/>
<dbReference type="HOGENOM" id="CLU_009600_0_3_9"/>
<dbReference type="Proteomes" id="UP000001301">
    <property type="component" value="Chromosome"/>
</dbReference>
<dbReference type="GO" id="GO:0030956">
    <property type="term" value="C:glutamyl-tRNA(Gln) amidotransferase complex"/>
    <property type="evidence" value="ECO:0007669"/>
    <property type="project" value="InterPro"/>
</dbReference>
<dbReference type="GO" id="GO:0005524">
    <property type="term" value="F:ATP binding"/>
    <property type="evidence" value="ECO:0007669"/>
    <property type="project" value="UniProtKB-KW"/>
</dbReference>
<dbReference type="GO" id="GO:0050567">
    <property type="term" value="F:glutaminyl-tRNA synthase (glutamine-hydrolyzing) activity"/>
    <property type="evidence" value="ECO:0007669"/>
    <property type="project" value="UniProtKB-UniRule"/>
</dbReference>
<dbReference type="GO" id="GO:0006412">
    <property type="term" value="P:translation"/>
    <property type="evidence" value="ECO:0007669"/>
    <property type="project" value="UniProtKB-UniRule"/>
</dbReference>
<dbReference type="Gene3D" id="3.90.1300.10">
    <property type="entry name" value="Amidase signature (AS) domain"/>
    <property type="match status" value="1"/>
</dbReference>
<dbReference type="HAMAP" id="MF_00120">
    <property type="entry name" value="GatA"/>
    <property type="match status" value="1"/>
</dbReference>
<dbReference type="InterPro" id="IPR000120">
    <property type="entry name" value="Amidase"/>
</dbReference>
<dbReference type="InterPro" id="IPR020556">
    <property type="entry name" value="Amidase_CS"/>
</dbReference>
<dbReference type="InterPro" id="IPR023631">
    <property type="entry name" value="Amidase_dom"/>
</dbReference>
<dbReference type="InterPro" id="IPR036928">
    <property type="entry name" value="AS_sf"/>
</dbReference>
<dbReference type="InterPro" id="IPR004412">
    <property type="entry name" value="GatA"/>
</dbReference>
<dbReference type="NCBIfam" id="TIGR00132">
    <property type="entry name" value="gatA"/>
    <property type="match status" value="1"/>
</dbReference>
<dbReference type="PANTHER" id="PTHR11895:SF151">
    <property type="entry name" value="GLUTAMYL-TRNA(GLN) AMIDOTRANSFERASE SUBUNIT A"/>
    <property type="match status" value="1"/>
</dbReference>
<dbReference type="PANTHER" id="PTHR11895">
    <property type="entry name" value="TRANSAMIDASE"/>
    <property type="match status" value="1"/>
</dbReference>
<dbReference type="Pfam" id="PF01425">
    <property type="entry name" value="Amidase"/>
    <property type="match status" value="1"/>
</dbReference>
<dbReference type="SUPFAM" id="SSF75304">
    <property type="entry name" value="Amidase signature (AS) enzymes"/>
    <property type="match status" value="1"/>
</dbReference>
<dbReference type="PROSITE" id="PS00571">
    <property type="entry name" value="AMIDASES"/>
    <property type="match status" value="1"/>
</dbReference>
<organism>
    <name type="scientific">Bacillus thuringiensis subsp. konkukian (strain 97-27)</name>
    <dbReference type="NCBI Taxonomy" id="281309"/>
    <lineage>
        <taxon>Bacteria</taxon>
        <taxon>Bacillati</taxon>
        <taxon>Bacillota</taxon>
        <taxon>Bacilli</taxon>
        <taxon>Bacillales</taxon>
        <taxon>Bacillaceae</taxon>
        <taxon>Bacillus</taxon>
        <taxon>Bacillus cereus group</taxon>
    </lineage>
</organism>
<sequence>MSLFDHSVSELHKKLNNKEISVTDLVEESYKRIADVEDNVKAFLTLDEENARAKAKELDAKIGAEDNGLLFGMPIGVKDNIVTNGLRTTCASKILANFDPIYDATVVQKLKAADTITIGKLNMDEFAMGSSNENSGFYATKNPWNLDYVPGGSSGGSAAAVAAGEVLFSLGSDTGGSIRQPAAYCGVVGLKPTYGRVSRYGLVAFASSLDQIGPITRTVEDNAYLLQAISGLDRMDATSANVEVGNYLAGLTGDVKGLRIAVPKEYLGEGVGEEARESVLAALKVLEGMGATWEEVSLPHSKYALATYYLLSSSEASANLSRFDGVRYGVRSDNVNNLLDLYKNTRSEGFGDEVKRRIMLGTFALSSGYYDAYYKKAQQVRTLIKNDFENVFANYDVIIGPTTPTPAFKVGEKVDDPMTMYANDILTIPVNLAGVPAISVPCGFGANNMPLGLQIIGKHFDEATIYRVAHAFEQATDYHTKKASL</sequence>
<reference key="1">
    <citation type="journal article" date="2006" name="J. Bacteriol.">
        <title>Pathogenomic sequence analysis of Bacillus cereus and Bacillus thuringiensis isolates closely related to Bacillus anthracis.</title>
        <authorList>
            <person name="Han C.S."/>
            <person name="Xie G."/>
            <person name="Challacombe J.F."/>
            <person name="Altherr M.R."/>
            <person name="Bhotika S.S."/>
            <person name="Bruce D."/>
            <person name="Campbell C.S."/>
            <person name="Campbell M.L."/>
            <person name="Chen J."/>
            <person name="Chertkov O."/>
            <person name="Cleland C."/>
            <person name="Dimitrijevic M."/>
            <person name="Doggett N.A."/>
            <person name="Fawcett J.J."/>
            <person name="Glavina T."/>
            <person name="Goodwin L.A."/>
            <person name="Hill K.K."/>
            <person name="Hitchcock P."/>
            <person name="Jackson P.J."/>
            <person name="Keim P."/>
            <person name="Kewalramani A.R."/>
            <person name="Longmire J."/>
            <person name="Lucas S."/>
            <person name="Malfatti S."/>
            <person name="McMurry K."/>
            <person name="Meincke L.J."/>
            <person name="Misra M."/>
            <person name="Moseman B.L."/>
            <person name="Mundt M."/>
            <person name="Munk A.C."/>
            <person name="Okinaka R.T."/>
            <person name="Parson-Quintana B."/>
            <person name="Reilly L.P."/>
            <person name="Richardson P."/>
            <person name="Robinson D.L."/>
            <person name="Rubin E."/>
            <person name="Saunders E."/>
            <person name="Tapia R."/>
            <person name="Tesmer J.G."/>
            <person name="Thayer N."/>
            <person name="Thompson L.S."/>
            <person name="Tice H."/>
            <person name="Ticknor L.O."/>
            <person name="Wills P.L."/>
            <person name="Brettin T.S."/>
            <person name="Gilna P."/>
        </authorList>
    </citation>
    <scope>NUCLEOTIDE SEQUENCE [LARGE SCALE GENOMIC DNA]</scope>
    <source>
        <strain>97-27</strain>
    </source>
</reference>
<gene>
    <name evidence="1" type="primary">gatA</name>
    <name type="ordered locus">BT9727_0289</name>
</gene>